<feature type="chain" id="PRO_0000252628" description="Glucose-6-phosphate isomerase">
    <location>
        <begin position="1"/>
        <end position="546"/>
    </location>
</feature>
<feature type="active site" description="Proton donor" evidence="1">
    <location>
        <position position="352"/>
    </location>
</feature>
<feature type="active site" evidence="1">
    <location>
        <position position="383"/>
    </location>
</feature>
<feature type="active site" evidence="1">
    <location>
        <position position="511"/>
    </location>
</feature>
<accession>Q2VYV7</accession>
<keyword id="KW-0963">Cytoplasm</keyword>
<keyword id="KW-0312">Gluconeogenesis</keyword>
<keyword id="KW-0324">Glycolysis</keyword>
<keyword id="KW-0413">Isomerase</keyword>
<comment type="function">
    <text evidence="1">Catalyzes the reversible isomerization of glucose-6-phosphate to fructose-6-phosphate.</text>
</comment>
<comment type="catalytic activity">
    <reaction evidence="1">
        <text>alpha-D-glucose 6-phosphate = beta-D-fructose 6-phosphate</text>
        <dbReference type="Rhea" id="RHEA:11816"/>
        <dbReference type="ChEBI" id="CHEBI:57634"/>
        <dbReference type="ChEBI" id="CHEBI:58225"/>
        <dbReference type="EC" id="5.3.1.9"/>
    </reaction>
</comment>
<comment type="pathway">
    <text evidence="1">Carbohydrate biosynthesis; gluconeogenesis.</text>
</comment>
<comment type="pathway">
    <text evidence="1">Carbohydrate degradation; glycolysis; D-glyceraldehyde 3-phosphate and glycerone phosphate from D-glucose: step 2/4.</text>
</comment>
<comment type="subcellular location">
    <subcellularLocation>
        <location evidence="1">Cytoplasm</location>
    </subcellularLocation>
</comment>
<comment type="similarity">
    <text evidence="1">Belongs to the GPI family.</text>
</comment>
<name>G6PI_PARM1</name>
<organism>
    <name type="scientific">Paramagnetospirillum magneticum (strain ATCC 700264 / AMB-1)</name>
    <name type="common">Magnetospirillum magneticum</name>
    <dbReference type="NCBI Taxonomy" id="342108"/>
    <lineage>
        <taxon>Bacteria</taxon>
        <taxon>Pseudomonadati</taxon>
        <taxon>Pseudomonadota</taxon>
        <taxon>Alphaproteobacteria</taxon>
        <taxon>Rhodospirillales</taxon>
        <taxon>Magnetospirillaceae</taxon>
        <taxon>Paramagnetospirillum</taxon>
    </lineage>
</organism>
<proteinExistence type="inferred from homology"/>
<reference key="1">
    <citation type="journal article" date="2005" name="DNA Res.">
        <title>Complete genome sequence of the facultative anaerobic magnetotactic bacterium Magnetospirillum sp. strain AMB-1.</title>
        <authorList>
            <person name="Matsunaga T."/>
            <person name="Okamura Y."/>
            <person name="Fukuda Y."/>
            <person name="Wahyudi A.T."/>
            <person name="Murase Y."/>
            <person name="Takeyama H."/>
        </authorList>
    </citation>
    <scope>NUCLEOTIDE SEQUENCE [LARGE SCALE GENOMIC DNA]</scope>
    <source>
        <strain>ATCC 700264 / AMB-1</strain>
    </source>
</reference>
<sequence length="546" mass="59543">MVHPVELPAWKELEALAATTGRRPMRDMFAEDPGRFDRFSARLGDLLLDYSKNRIDAQVMAALVRLAGQAGLPAAREAMFGGEAFNVTEHRAVLHTALRNRSDRPVPVDGHDVMPEIRAVLARMKDFAGRVRSGDWKGATGRPIRSVVNIGIGGSDLGPVMVTEALKPYQKADLAVHFISNVDGSHAAEVLKLCDAETTLFIVASKTFTTQETIANARTCRAWLVEKLGEAAIPAHFVALSTNGKAVAEFGIDTANMFGFWDWVGGRYSLWSAIGLSIALAVGFERFEELLAGGHAMDRHFQDTPLEANLPVILGLIGIWNANFLGADAYAVLPYDQYLHRLPAYLQQLDMESNGKGTARDGATVSWGTGPMVFGEPGTNGQHAFYQLIHQGTRLIPCDFLAAANSHNPLGEHHLMLLSNVLAQAEALMKGKTGAEARAELEKAGMDPAEIAFQLPHRVFPGNRPSNTLLYPRLDPFMLGQLIALYEHKVFVQGVIWNICSFDQWGVELGKVLAKAILAELSSEKTSSTHDCSTAGLINAVRQMRQ</sequence>
<gene>
    <name evidence="1" type="primary">pgi</name>
    <name type="ordered locus">amb4414</name>
</gene>
<dbReference type="EC" id="5.3.1.9" evidence="1"/>
<dbReference type="EMBL" id="AP007255">
    <property type="protein sequence ID" value="BAE53218.1"/>
    <property type="molecule type" value="Genomic_DNA"/>
</dbReference>
<dbReference type="RefSeq" id="WP_011386759.1">
    <property type="nucleotide sequence ID" value="NC_007626.1"/>
</dbReference>
<dbReference type="SMR" id="Q2VYV7"/>
<dbReference type="STRING" id="342108.amb4414"/>
<dbReference type="KEGG" id="mag:amb4414"/>
<dbReference type="HOGENOM" id="CLU_017947_3_1_5"/>
<dbReference type="OrthoDB" id="140919at2"/>
<dbReference type="UniPathway" id="UPA00109">
    <property type="reaction ID" value="UER00181"/>
</dbReference>
<dbReference type="UniPathway" id="UPA00138"/>
<dbReference type="Proteomes" id="UP000007058">
    <property type="component" value="Chromosome"/>
</dbReference>
<dbReference type="GO" id="GO:0005829">
    <property type="term" value="C:cytosol"/>
    <property type="evidence" value="ECO:0007669"/>
    <property type="project" value="TreeGrafter"/>
</dbReference>
<dbReference type="GO" id="GO:0097367">
    <property type="term" value="F:carbohydrate derivative binding"/>
    <property type="evidence" value="ECO:0007669"/>
    <property type="project" value="InterPro"/>
</dbReference>
<dbReference type="GO" id="GO:0004347">
    <property type="term" value="F:glucose-6-phosphate isomerase activity"/>
    <property type="evidence" value="ECO:0007669"/>
    <property type="project" value="UniProtKB-UniRule"/>
</dbReference>
<dbReference type="GO" id="GO:0048029">
    <property type="term" value="F:monosaccharide binding"/>
    <property type="evidence" value="ECO:0007669"/>
    <property type="project" value="TreeGrafter"/>
</dbReference>
<dbReference type="GO" id="GO:0006094">
    <property type="term" value="P:gluconeogenesis"/>
    <property type="evidence" value="ECO:0007669"/>
    <property type="project" value="UniProtKB-UniRule"/>
</dbReference>
<dbReference type="GO" id="GO:0051156">
    <property type="term" value="P:glucose 6-phosphate metabolic process"/>
    <property type="evidence" value="ECO:0007669"/>
    <property type="project" value="TreeGrafter"/>
</dbReference>
<dbReference type="GO" id="GO:0006096">
    <property type="term" value="P:glycolytic process"/>
    <property type="evidence" value="ECO:0007669"/>
    <property type="project" value="UniProtKB-UniRule"/>
</dbReference>
<dbReference type="CDD" id="cd05015">
    <property type="entry name" value="SIS_PGI_1"/>
    <property type="match status" value="1"/>
</dbReference>
<dbReference type="CDD" id="cd05016">
    <property type="entry name" value="SIS_PGI_2"/>
    <property type="match status" value="1"/>
</dbReference>
<dbReference type="FunFam" id="1.10.1390.10:FF:000001">
    <property type="entry name" value="Glucose-6-phosphate isomerase"/>
    <property type="match status" value="1"/>
</dbReference>
<dbReference type="FunFam" id="3.40.50.10490:FF:000004">
    <property type="entry name" value="Glucose-6-phosphate isomerase"/>
    <property type="match status" value="1"/>
</dbReference>
<dbReference type="Gene3D" id="1.10.1390.10">
    <property type="match status" value="1"/>
</dbReference>
<dbReference type="Gene3D" id="3.40.50.10490">
    <property type="entry name" value="Glucose-6-phosphate isomerase like protein, domain 1"/>
    <property type="match status" value="2"/>
</dbReference>
<dbReference type="HAMAP" id="MF_00473">
    <property type="entry name" value="G6P_isomerase"/>
    <property type="match status" value="1"/>
</dbReference>
<dbReference type="InterPro" id="IPR001672">
    <property type="entry name" value="G6P_Isomerase"/>
</dbReference>
<dbReference type="InterPro" id="IPR023096">
    <property type="entry name" value="G6P_Isomerase_C"/>
</dbReference>
<dbReference type="InterPro" id="IPR018189">
    <property type="entry name" value="Phosphoglucose_isomerase_CS"/>
</dbReference>
<dbReference type="InterPro" id="IPR046348">
    <property type="entry name" value="SIS_dom_sf"/>
</dbReference>
<dbReference type="InterPro" id="IPR035476">
    <property type="entry name" value="SIS_PGI_1"/>
</dbReference>
<dbReference type="InterPro" id="IPR035482">
    <property type="entry name" value="SIS_PGI_2"/>
</dbReference>
<dbReference type="NCBIfam" id="NF001211">
    <property type="entry name" value="PRK00179.1"/>
    <property type="match status" value="1"/>
</dbReference>
<dbReference type="PANTHER" id="PTHR11469">
    <property type="entry name" value="GLUCOSE-6-PHOSPHATE ISOMERASE"/>
    <property type="match status" value="1"/>
</dbReference>
<dbReference type="PANTHER" id="PTHR11469:SF1">
    <property type="entry name" value="GLUCOSE-6-PHOSPHATE ISOMERASE"/>
    <property type="match status" value="1"/>
</dbReference>
<dbReference type="Pfam" id="PF00342">
    <property type="entry name" value="PGI"/>
    <property type="match status" value="1"/>
</dbReference>
<dbReference type="PRINTS" id="PR00662">
    <property type="entry name" value="G6PISOMERASE"/>
</dbReference>
<dbReference type="SUPFAM" id="SSF53697">
    <property type="entry name" value="SIS domain"/>
    <property type="match status" value="1"/>
</dbReference>
<dbReference type="PROSITE" id="PS00765">
    <property type="entry name" value="P_GLUCOSE_ISOMERASE_1"/>
    <property type="match status" value="1"/>
</dbReference>
<dbReference type="PROSITE" id="PS00174">
    <property type="entry name" value="P_GLUCOSE_ISOMERASE_2"/>
    <property type="match status" value="1"/>
</dbReference>
<dbReference type="PROSITE" id="PS51463">
    <property type="entry name" value="P_GLUCOSE_ISOMERASE_3"/>
    <property type="match status" value="1"/>
</dbReference>
<protein>
    <recommendedName>
        <fullName evidence="1">Glucose-6-phosphate isomerase</fullName>
        <shortName evidence="1">GPI</shortName>
        <ecNumber evidence="1">5.3.1.9</ecNumber>
    </recommendedName>
    <alternativeName>
        <fullName evidence="1">Phosphoglucose isomerase</fullName>
        <shortName evidence="1">PGI</shortName>
    </alternativeName>
    <alternativeName>
        <fullName evidence="1">Phosphohexose isomerase</fullName>
        <shortName evidence="1">PHI</shortName>
    </alternativeName>
</protein>
<evidence type="ECO:0000255" key="1">
    <source>
        <dbReference type="HAMAP-Rule" id="MF_00473"/>
    </source>
</evidence>